<comment type="function">
    <text evidence="3">Probable transcriptional regulator involved in the regulation of the proneural AS-C genes and the neurogenic genes of the enhancer of split complex. Could specifically activate proneural genes in the ventral-most neuroectoderm.</text>
</comment>
<comment type="subcellular location">
    <subcellularLocation>
        <location evidence="4">Nucleus</location>
    </subcellularLocation>
</comment>
<comment type="tissue specificity">
    <text evidence="3">Expressed in the CNS and midgut.</text>
</comment>
<comment type="similarity">
    <text evidence="4">Belongs to the NK-2 homeobox family.</text>
</comment>
<gene>
    <name type="primary">vnd</name>
    <name type="synonym">NK2</name>
    <name type="ORF">CG6172</name>
</gene>
<sequence length="723" mass="76422">MTTSASLERTPSKRDRDRERDNSSGLGSAGSLPASPQSAITVSPSSPATPKRPLRTSTPSLERKREREDREDREDRKERQERHERDRDHERFAAVFSTASTTVPTNTSSSSGLAPEQLRIPTGAAAFSGFPGLHSMSSLMLPSSAAVAAAAAAPFLPWSPILLPPWNHALLPAAFYPAALRNALPGLFDAKVPSSQRSGFHISDILNLEGSELKNAAAAAAAAAHHGSDLSHHSASESTSGHRGQGSHTSPSALSPTPAGVSADEHHNGSGTGGGAGEADHHSTTEHHAPPSHPQQQHPHHQQHHHPHLLLPQQHHQQAVAPLPLAHHQSGEAQSHAHANAAAAHLLASHNAAAAAAVAAGQYLPNLPKNFPGSFGDEMSSYHHMAQTMLQHSGRSAWIKENELYGTQQPASPDSTSPVTSEVSYTYIGSNCQTSPALSGDYKSYSRSADSDALSVGDALHTLHGSSGNGSAGGAPTAHALHNNNNNTTNNNNHSLKAEGINGAGSGHDDSLNEDGIEEDIDDVDDADGSGGGDANGSDGLPNKKRKRRVLFTKAQTYELERRFRQQRYLSAPEREHLASLIRLTPTQVKIWFQNHRYKTKRAQNEKGYEGHPGLLHGHATHPHHPSALPSPRRVAVPVLVRNGKPCLGDSSKLGADCVSVSSATATAMQNAAAHHLVALNGAAAYQHAAAAAAGLHAHAHAHAHAHGHGHPHAHAQRAAWWP</sequence>
<reference key="1">
    <citation type="journal article" date="1995" name="EMBO J.">
        <title>vnd, a gene required for early neurogenesis of Drosophila, encodes a homeodomain protein.</title>
        <authorList>
            <person name="Jimenez F."/>
            <person name="Martin-Morris L.E."/>
            <person name="Velasco L."/>
            <person name="Chu H."/>
            <person name="Sierra J."/>
            <person name="Rosen D.R."/>
            <person name="White K."/>
        </authorList>
    </citation>
    <scope>NUCLEOTIDE SEQUENCE [MRNA]</scope>
    <scope>FUNCTION</scope>
    <scope>TISSUE SPECIFICITY</scope>
    <scope>MUTAGENESIS OF ALA-579</scope>
</reference>
<reference key="2">
    <citation type="journal article" date="1995" name="Ann. N. Y. Acad. Sci.">
        <title>The NK-2 homeobox gene and the early development of the central nervous system of Drosophila.</title>
        <authorList>
            <person name="Nirenberg M."/>
            <person name="Nakayama K."/>
            <person name="Nakayama N."/>
            <person name="Kim Y."/>
            <person name="Mellerick D."/>
            <person name="Wang L.H."/>
            <person name="Webber K.O."/>
            <person name="Lad R."/>
        </authorList>
    </citation>
    <scope>NUCLEOTIDE SEQUENCE [MRNA]</scope>
</reference>
<reference key="3">
    <citation type="journal article" date="2000" name="Science">
        <title>The genome sequence of Drosophila melanogaster.</title>
        <authorList>
            <person name="Adams M.D."/>
            <person name="Celniker S.E."/>
            <person name="Holt R.A."/>
            <person name="Evans C.A."/>
            <person name="Gocayne J.D."/>
            <person name="Amanatides P.G."/>
            <person name="Scherer S.E."/>
            <person name="Li P.W."/>
            <person name="Hoskins R.A."/>
            <person name="Galle R.F."/>
            <person name="George R.A."/>
            <person name="Lewis S.E."/>
            <person name="Richards S."/>
            <person name="Ashburner M."/>
            <person name="Henderson S.N."/>
            <person name="Sutton G.G."/>
            <person name="Wortman J.R."/>
            <person name="Yandell M.D."/>
            <person name="Zhang Q."/>
            <person name="Chen L.X."/>
            <person name="Brandon R.C."/>
            <person name="Rogers Y.-H.C."/>
            <person name="Blazej R.G."/>
            <person name="Champe M."/>
            <person name="Pfeiffer B.D."/>
            <person name="Wan K.H."/>
            <person name="Doyle C."/>
            <person name="Baxter E.G."/>
            <person name="Helt G."/>
            <person name="Nelson C.R."/>
            <person name="Miklos G.L.G."/>
            <person name="Abril J.F."/>
            <person name="Agbayani A."/>
            <person name="An H.-J."/>
            <person name="Andrews-Pfannkoch C."/>
            <person name="Baldwin D."/>
            <person name="Ballew R.M."/>
            <person name="Basu A."/>
            <person name="Baxendale J."/>
            <person name="Bayraktaroglu L."/>
            <person name="Beasley E.M."/>
            <person name="Beeson K.Y."/>
            <person name="Benos P.V."/>
            <person name="Berman B.P."/>
            <person name="Bhandari D."/>
            <person name="Bolshakov S."/>
            <person name="Borkova D."/>
            <person name="Botchan M.R."/>
            <person name="Bouck J."/>
            <person name="Brokstein P."/>
            <person name="Brottier P."/>
            <person name="Burtis K.C."/>
            <person name="Busam D.A."/>
            <person name="Butler H."/>
            <person name="Cadieu E."/>
            <person name="Center A."/>
            <person name="Chandra I."/>
            <person name="Cherry J.M."/>
            <person name="Cawley S."/>
            <person name="Dahlke C."/>
            <person name="Davenport L.B."/>
            <person name="Davies P."/>
            <person name="de Pablos B."/>
            <person name="Delcher A."/>
            <person name="Deng Z."/>
            <person name="Mays A.D."/>
            <person name="Dew I."/>
            <person name="Dietz S.M."/>
            <person name="Dodson K."/>
            <person name="Doup L.E."/>
            <person name="Downes M."/>
            <person name="Dugan-Rocha S."/>
            <person name="Dunkov B.C."/>
            <person name="Dunn P."/>
            <person name="Durbin K.J."/>
            <person name="Evangelista C.C."/>
            <person name="Ferraz C."/>
            <person name="Ferriera S."/>
            <person name="Fleischmann W."/>
            <person name="Fosler C."/>
            <person name="Gabrielian A.E."/>
            <person name="Garg N.S."/>
            <person name="Gelbart W.M."/>
            <person name="Glasser K."/>
            <person name="Glodek A."/>
            <person name="Gong F."/>
            <person name="Gorrell J.H."/>
            <person name="Gu Z."/>
            <person name="Guan P."/>
            <person name="Harris M."/>
            <person name="Harris N.L."/>
            <person name="Harvey D.A."/>
            <person name="Heiman T.J."/>
            <person name="Hernandez J.R."/>
            <person name="Houck J."/>
            <person name="Hostin D."/>
            <person name="Houston K.A."/>
            <person name="Howland T.J."/>
            <person name="Wei M.-H."/>
            <person name="Ibegwam C."/>
            <person name="Jalali M."/>
            <person name="Kalush F."/>
            <person name="Karpen G.H."/>
            <person name="Ke Z."/>
            <person name="Kennison J.A."/>
            <person name="Ketchum K.A."/>
            <person name="Kimmel B.E."/>
            <person name="Kodira C.D."/>
            <person name="Kraft C.L."/>
            <person name="Kravitz S."/>
            <person name="Kulp D."/>
            <person name="Lai Z."/>
            <person name="Lasko P."/>
            <person name="Lei Y."/>
            <person name="Levitsky A.A."/>
            <person name="Li J.H."/>
            <person name="Li Z."/>
            <person name="Liang Y."/>
            <person name="Lin X."/>
            <person name="Liu X."/>
            <person name="Mattei B."/>
            <person name="McIntosh T.C."/>
            <person name="McLeod M.P."/>
            <person name="McPherson D."/>
            <person name="Merkulov G."/>
            <person name="Milshina N.V."/>
            <person name="Mobarry C."/>
            <person name="Morris J."/>
            <person name="Moshrefi A."/>
            <person name="Mount S.M."/>
            <person name="Moy M."/>
            <person name="Murphy B."/>
            <person name="Murphy L."/>
            <person name="Muzny D.M."/>
            <person name="Nelson D.L."/>
            <person name="Nelson D.R."/>
            <person name="Nelson K.A."/>
            <person name="Nixon K."/>
            <person name="Nusskern D.R."/>
            <person name="Pacleb J.M."/>
            <person name="Palazzolo M."/>
            <person name="Pittman G.S."/>
            <person name="Pan S."/>
            <person name="Pollard J."/>
            <person name="Puri V."/>
            <person name="Reese M.G."/>
            <person name="Reinert K."/>
            <person name="Remington K."/>
            <person name="Saunders R.D.C."/>
            <person name="Scheeler F."/>
            <person name="Shen H."/>
            <person name="Shue B.C."/>
            <person name="Siden-Kiamos I."/>
            <person name="Simpson M."/>
            <person name="Skupski M.P."/>
            <person name="Smith T.J."/>
            <person name="Spier E."/>
            <person name="Spradling A.C."/>
            <person name="Stapleton M."/>
            <person name="Strong R."/>
            <person name="Sun E."/>
            <person name="Svirskas R."/>
            <person name="Tector C."/>
            <person name="Turner R."/>
            <person name="Venter E."/>
            <person name="Wang A.H."/>
            <person name="Wang X."/>
            <person name="Wang Z.-Y."/>
            <person name="Wassarman D.A."/>
            <person name="Weinstock G.M."/>
            <person name="Weissenbach J."/>
            <person name="Williams S.M."/>
            <person name="Woodage T."/>
            <person name="Worley K.C."/>
            <person name="Wu D."/>
            <person name="Yang S."/>
            <person name="Yao Q.A."/>
            <person name="Ye J."/>
            <person name="Yeh R.-F."/>
            <person name="Zaveri J.S."/>
            <person name="Zhan M."/>
            <person name="Zhang G."/>
            <person name="Zhao Q."/>
            <person name="Zheng L."/>
            <person name="Zheng X.H."/>
            <person name="Zhong F.N."/>
            <person name="Zhong W."/>
            <person name="Zhou X."/>
            <person name="Zhu S.C."/>
            <person name="Zhu X."/>
            <person name="Smith H.O."/>
            <person name="Gibbs R.A."/>
            <person name="Myers E.W."/>
            <person name="Rubin G.M."/>
            <person name="Venter J.C."/>
        </authorList>
    </citation>
    <scope>NUCLEOTIDE SEQUENCE [LARGE SCALE GENOMIC DNA]</scope>
    <source>
        <strain>Berkeley</strain>
    </source>
</reference>
<reference key="4">
    <citation type="journal article" date="2002" name="Genome Biol.">
        <title>Annotation of the Drosophila melanogaster euchromatic genome: a systematic review.</title>
        <authorList>
            <person name="Misra S."/>
            <person name="Crosby M.A."/>
            <person name="Mungall C.J."/>
            <person name="Matthews B.B."/>
            <person name="Campbell K.S."/>
            <person name="Hradecky P."/>
            <person name="Huang Y."/>
            <person name="Kaminker J.S."/>
            <person name="Millburn G.H."/>
            <person name="Prochnik S.E."/>
            <person name="Smith C.D."/>
            <person name="Tupy J.L."/>
            <person name="Whitfield E.J."/>
            <person name="Bayraktaroglu L."/>
            <person name="Berman B.P."/>
            <person name="Bettencourt B.R."/>
            <person name="Celniker S.E."/>
            <person name="de Grey A.D.N.J."/>
            <person name="Drysdale R.A."/>
            <person name="Harris N.L."/>
            <person name="Richter J."/>
            <person name="Russo S."/>
            <person name="Schroeder A.J."/>
            <person name="Shu S.Q."/>
            <person name="Stapleton M."/>
            <person name="Yamada C."/>
            <person name="Ashburner M."/>
            <person name="Gelbart W.M."/>
            <person name="Rubin G.M."/>
            <person name="Lewis S.E."/>
        </authorList>
    </citation>
    <scope>GENOME REANNOTATION</scope>
    <source>
        <strain>Berkeley</strain>
    </source>
</reference>
<reference key="5">
    <citation type="journal article" date="2000" name="Science">
        <title>From sequence to chromosome: the tip of the X chromosome of D. melanogaster.</title>
        <authorList>
            <person name="Benos P.V."/>
            <person name="Gatt M.K."/>
            <person name="Ashburner M."/>
            <person name="Murphy L."/>
            <person name="Harris D."/>
            <person name="Barrell B.G."/>
            <person name="Ferraz C."/>
            <person name="Vidal S."/>
            <person name="Brun C."/>
            <person name="Demailles J."/>
            <person name="Cadieu E."/>
            <person name="Dreano S."/>
            <person name="Gloux S."/>
            <person name="Lelaure V."/>
            <person name="Mottier S."/>
            <person name="Galibert F."/>
            <person name="Borkova D."/>
            <person name="Minana B."/>
            <person name="Kafatos F.C."/>
            <person name="Louis C."/>
            <person name="Siden-Kiamos I."/>
            <person name="Bolshakov S."/>
            <person name="Papagiannakis G."/>
            <person name="Spanos L."/>
            <person name="Cox S."/>
            <person name="Madueno E."/>
            <person name="de Pablos B."/>
            <person name="Modolell J."/>
            <person name="Peter A."/>
            <person name="Schoettler P."/>
            <person name="Werner M."/>
            <person name="Mourkioti F."/>
            <person name="Beinert N."/>
            <person name="Dowe G."/>
            <person name="Schaefer U."/>
            <person name="Jaeckle H."/>
            <person name="Bucheton A."/>
            <person name="Callister D.M."/>
            <person name="Campbell L.A."/>
            <person name="Darlamitsou A."/>
            <person name="Henderson N.S."/>
            <person name="McMillan P.J."/>
            <person name="Salles C."/>
            <person name="Tait E.A."/>
            <person name="Valenti P."/>
            <person name="Saunders R.D.C."/>
            <person name="Glover D.M."/>
        </authorList>
    </citation>
    <scope>NUCLEOTIDE SEQUENCE [LARGE SCALE GENOMIC DNA]</scope>
    <source>
        <strain>Oregon-R</strain>
    </source>
</reference>
<reference key="6">
    <citation type="journal article" date="1989" name="Proc. Natl. Acad. Sci. U.S.A.">
        <title>Drosophila NK-homeobox genes.</title>
        <authorList>
            <person name="Kim Y."/>
            <person name="Nirenberg M."/>
        </authorList>
    </citation>
    <scope>NUCLEOTIDE SEQUENCE [GENOMIC DNA] OF 477-634</scope>
    <source>
        <strain>Canton-S</strain>
    </source>
</reference>
<reference key="7">
    <citation type="journal article" date="1995" name="J. Mol. Biol.">
        <title>The three-dimensional solution structure of the NK-2 homeodomain from Drosophila.</title>
        <authorList>
            <person name="Tsao D.H.H."/>
            <person name="Gruschus J.M."/>
            <person name="Wang L.-H."/>
            <person name="Nirenberg M."/>
            <person name="Ferretti J.A."/>
        </authorList>
    </citation>
    <scope>STRUCTURE BY NMR OF 538-613</scope>
</reference>
<reference key="8">
    <citation type="journal article" date="1997" name="Biochemistry">
        <title>Interactions of the vnd/NK-2 homeodomain with DNA by nuclear magnetic resonance spectroscopy: basis of binding specificity.</title>
        <authorList>
            <person name="Gruschus J.M."/>
            <person name="Tsao D.H.H."/>
            <person name="Wang L.-H."/>
            <person name="Nirenberg M."/>
            <person name="Ferretti J.A."/>
        </authorList>
    </citation>
    <scope>STRUCTURE BY NMR OF 544-606</scope>
</reference>
<reference key="9">
    <citation type="submission" date="1999-07" db="PDB data bank">
        <authorList>
            <person name="Bosong X."/>
        </authorList>
    </citation>
    <scope>STRUCTURE BY NMR OF 533-612</scope>
</reference>
<name>VND_DROME</name>
<accession>P22808</accession>
<accession>Q24589</accession>
<accession>Q26436</accession>
<accession>Q9UB43</accession>
<accession>Q9W5F0</accession>
<feature type="chain" id="PRO_0000049071" description="Homeobox protein vnd">
    <location>
        <begin position="1"/>
        <end position="723"/>
    </location>
</feature>
<feature type="DNA-binding region" description="Homeobox" evidence="1">
    <location>
        <begin position="545"/>
        <end position="604"/>
    </location>
</feature>
<feature type="region of interest" description="Disordered" evidence="2">
    <location>
        <begin position="1"/>
        <end position="115"/>
    </location>
</feature>
<feature type="region of interest" description="Disordered" evidence="2">
    <location>
        <begin position="224"/>
        <end position="307"/>
    </location>
</feature>
<feature type="region of interest" description="Disordered" evidence="2">
    <location>
        <begin position="465"/>
        <end position="549"/>
    </location>
</feature>
<feature type="region of interest" description="Disordered" evidence="2">
    <location>
        <begin position="703"/>
        <end position="723"/>
    </location>
</feature>
<feature type="compositionally biased region" description="Basic and acidic residues" evidence="2">
    <location>
        <begin position="10"/>
        <end position="22"/>
    </location>
</feature>
<feature type="compositionally biased region" description="Low complexity" evidence="2">
    <location>
        <begin position="23"/>
        <end position="36"/>
    </location>
</feature>
<feature type="compositionally biased region" description="Polar residues" evidence="2">
    <location>
        <begin position="37"/>
        <end position="48"/>
    </location>
</feature>
<feature type="compositionally biased region" description="Basic and acidic residues" evidence="2">
    <location>
        <begin position="61"/>
        <end position="92"/>
    </location>
</feature>
<feature type="compositionally biased region" description="Low complexity" evidence="2">
    <location>
        <begin position="97"/>
        <end position="111"/>
    </location>
</feature>
<feature type="compositionally biased region" description="Basic and acidic residues" evidence="2">
    <location>
        <begin position="226"/>
        <end position="235"/>
    </location>
</feature>
<feature type="compositionally biased region" description="Polar residues" evidence="2">
    <location>
        <begin position="237"/>
        <end position="255"/>
    </location>
</feature>
<feature type="compositionally biased region" description="Basic and acidic residues" evidence="2">
    <location>
        <begin position="278"/>
        <end position="289"/>
    </location>
</feature>
<feature type="compositionally biased region" description="Basic residues" evidence="2">
    <location>
        <begin position="298"/>
        <end position="307"/>
    </location>
</feature>
<feature type="compositionally biased region" description="Low complexity" evidence="2">
    <location>
        <begin position="483"/>
        <end position="493"/>
    </location>
</feature>
<feature type="compositionally biased region" description="Acidic residues" evidence="2">
    <location>
        <begin position="512"/>
        <end position="528"/>
    </location>
</feature>
<feature type="compositionally biased region" description="Basic residues" evidence="2">
    <location>
        <begin position="703"/>
        <end position="716"/>
    </location>
</feature>
<feature type="mutagenesis site" description="In vnd-29; disrupts neuroblast development." evidence="3">
    <original>A</original>
    <variation>T</variation>
    <location>
        <position position="579"/>
    </location>
</feature>
<feature type="sequence conflict" description="In Ref. 2; AAB34960." evidence="4" ref="2">
    <original>R</original>
    <variation>A</variation>
    <location>
        <position position="52"/>
    </location>
</feature>
<feature type="sequence conflict" description="In Ref. 2; AAB34960." evidence="4" ref="2">
    <original>R</original>
    <variation>P</variation>
    <location>
        <position position="55"/>
    </location>
</feature>
<feature type="sequence conflict" description="In Ref. 1; CAA60619." evidence="4" ref="1">
    <original>D</original>
    <variation>E</variation>
    <location>
        <position position="88"/>
    </location>
</feature>
<feature type="sequence conflict" description="In Ref. 1; CAA60619." evidence="4" ref="1">
    <original>A</original>
    <variation>R</variation>
    <location>
        <position position="149"/>
    </location>
</feature>
<feature type="sequence conflict" description="In Ref. 1; CAA60619." evidence="4" ref="1">
    <location>
        <position position="153"/>
    </location>
</feature>
<feature type="sequence conflict" description="In Ref. 2; AAB34960." evidence="4" ref="2">
    <original>L</original>
    <variation>V</variation>
    <location>
        <position position="254"/>
    </location>
</feature>
<feature type="sequence conflict" description="In Ref. 1; CAA60619." evidence="4" ref="1">
    <original>Q</original>
    <variation>K</variation>
    <location>
        <position position="362"/>
    </location>
</feature>
<feature type="sequence conflict" description="In Ref. 1; CAA60619." evidence="4" ref="1">
    <original>I</original>
    <variation>M</variation>
    <location>
        <position position="399"/>
    </location>
</feature>
<feature type="sequence conflict" description="In Ref. 5; CAA21410." evidence="4" ref="5">
    <original>Y</original>
    <variation>H</variation>
    <location>
        <position position="405"/>
    </location>
</feature>
<feature type="sequence conflict" description="In Ref. 5; CAA21410." evidence="4" ref="5">
    <original>E</original>
    <variation>D</variation>
    <location>
        <position position="610"/>
    </location>
</feature>
<feature type="sequence conflict" description="In Ref. 6." evidence="4" ref="6">
    <original>RR</original>
    <variation>VG</variation>
    <location>
        <begin position="633"/>
        <end position="634"/>
    </location>
</feature>
<feature type="strand" evidence="7">
    <location>
        <begin position="542"/>
        <end position="545"/>
    </location>
</feature>
<feature type="helix" evidence="5">
    <location>
        <begin position="554"/>
        <end position="566"/>
    </location>
</feature>
<feature type="helix" evidence="5">
    <location>
        <begin position="572"/>
        <end position="581"/>
    </location>
</feature>
<feature type="helix" evidence="5">
    <location>
        <begin position="586"/>
        <end position="606"/>
    </location>
</feature>
<feature type="strand" evidence="6">
    <location>
        <begin position="608"/>
        <end position="611"/>
    </location>
</feature>
<evidence type="ECO:0000255" key="1">
    <source>
        <dbReference type="PROSITE-ProRule" id="PRU00108"/>
    </source>
</evidence>
<evidence type="ECO:0000256" key="2">
    <source>
        <dbReference type="SAM" id="MobiDB-lite"/>
    </source>
</evidence>
<evidence type="ECO:0000269" key="3">
    <source>
    </source>
</evidence>
<evidence type="ECO:0000305" key="4"/>
<evidence type="ECO:0007829" key="5">
    <source>
        <dbReference type="PDB" id="1NK2"/>
    </source>
</evidence>
<evidence type="ECO:0007829" key="6">
    <source>
        <dbReference type="PDB" id="1QRY"/>
    </source>
</evidence>
<evidence type="ECO:0007829" key="7">
    <source>
        <dbReference type="PDB" id="1VND"/>
    </source>
</evidence>
<dbReference type="EMBL" id="X87141">
    <property type="protein sequence ID" value="CAA60619.1"/>
    <property type="molecule type" value="mRNA"/>
</dbReference>
<dbReference type="EMBL" id="S78691">
    <property type="protein sequence ID" value="AAB34960.1"/>
    <property type="molecule type" value="mRNA"/>
</dbReference>
<dbReference type="EMBL" id="AE014298">
    <property type="protein sequence ID" value="AAF45521.1"/>
    <property type="molecule type" value="Genomic_DNA"/>
</dbReference>
<dbReference type="EMBL" id="AL031883">
    <property type="protein sequence ID" value="CAA21410.1"/>
    <property type="molecule type" value="Genomic_DNA"/>
</dbReference>
<dbReference type="EMBL" id="M27290">
    <property type="protein sequence ID" value="AAA28617.1"/>
    <property type="molecule type" value="Genomic_DNA"/>
</dbReference>
<dbReference type="PIR" id="S57246">
    <property type="entry name" value="S57246"/>
</dbReference>
<dbReference type="RefSeq" id="NP_476786.2">
    <property type="nucleotide sequence ID" value="NM_057438.4"/>
</dbReference>
<dbReference type="PDB" id="1NK2">
    <property type="method" value="NMR"/>
    <property type="chains" value="P=538-613"/>
</dbReference>
<dbReference type="PDB" id="1NK3">
    <property type="method" value="NMR"/>
    <property type="chains" value="P=538-613"/>
</dbReference>
<dbReference type="PDB" id="1QRY">
    <property type="method" value="NMR"/>
    <property type="chains" value="A=538-613"/>
</dbReference>
<dbReference type="PDB" id="1VND">
    <property type="method" value="NMR"/>
    <property type="chains" value="A=538-613"/>
</dbReference>
<dbReference type="PDBsum" id="1NK2"/>
<dbReference type="PDBsum" id="1NK3"/>
<dbReference type="PDBsum" id="1QRY"/>
<dbReference type="PDBsum" id="1VND"/>
<dbReference type="BMRB" id="P22808"/>
<dbReference type="SMR" id="P22808"/>
<dbReference type="BioGRID" id="57572">
    <property type="interactions" value="31"/>
</dbReference>
<dbReference type="DIP" id="DIP-60882N"/>
<dbReference type="FunCoup" id="P22808">
    <property type="interactions" value="19"/>
</dbReference>
<dbReference type="IntAct" id="P22808">
    <property type="interactions" value="14"/>
</dbReference>
<dbReference type="STRING" id="7227.FBpp0070105"/>
<dbReference type="GlyGen" id="P22808">
    <property type="glycosylation" value="1 site"/>
</dbReference>
<dbReference type="PaxDb" id="7227-FBpp0070105"/>
<dbReference type="EnsemblMetazoa" id="FBtr0070110">
    <property type="protein sequence ID" value="FBpp0070105"/>
    <property type="gene ID" value="FBgn0261930"/>
</dbReference>
<dbReference type="GeneID" id="31003"/>
<dbReference type="KEGG" id="dme:Dmel_CG6172"/>
<dbReference type="AGR" id="FB:FBgn0261930"/>
<dbReference type="CTD" id="31003"/>
<dbReference type="FlyBase" id="FBgn0261930">
    <property type="gene designation" value="vnd"/>
</dbReference>
<dbReference type="VEuPathDB" id="VectorBase:FBgn0261930"/>
<dbReference type="eggNOG" id="KOG0842">
    <property type="taxonomic scope" value="Eukaryota"/>
</dbReference>
<dbReference type="GeneTree" id="ENSGT00940000166323"/>
<dbReference type="HOGENOM" id="CLU_023266_0_0_1"/>
<dbReference type="InParanoid" id="P22808"/>
<dbReference type="OMA" id="MGAHANA"/>
<dbReference type="OrthoDB" id="6159439at2759"/>
<dbReference type="PhylomeDB" id="P22808"/>
<dbReference type="BioGRID-ORCS" id="31003">
    <property type="hits" value="0 hits in 3 CRISPR screens"/>
</dbReference>
<dbReference type="EvolutionaryTrace" id="P22808"/>
<dbReference type="GenomeRNAi" id="31003"/>
<dbReference type="PRO" id="PR:P22808"/>
<dbReference type="Proteomes" id="UP000000803">
    <property type="component" value="Chromosome X"/>
</dbReference>
<dbReference type="Bgee" id="FBgn0261930">
    <property type="expression patterns" value="Expressed in enterocyte of anterior adult midgut epithelium in digestive tract and 58 other cell types or tissues"/>
</dbReference>
<dbReference type="ExpressionAtlas" id="P22808">
    <property type="expression patterns" value="baseline and differential"/>
</dbReference>
<dbReference type="GO" id="GO:0005634">
    <property type="term" value="C:nucleus"/>
    <property type="evidence" value="ECO:0000314"/>
    <property type="project" value="FlyBase"/>
</dbReference>
<dbReference type="GO" id="GO:0000981">
    <property type="term" value="F:DNA-binding transcription factor activity, RNA polymerase II-specific"/>
    <property type="evidence" value="ECO:0000314"/>
    <property type="project" value="FlyBase"/>
</dbReference>
<dbReference type="GO" id="GO:0140297">
    <property type="term" value="F:DNA-binding transcription factor binding"/>
    <property type="evidence" value="ECO:0000353"/>
    <property type="project" value="FlyBase"/>
</dbReference>
<dbReference type="GO" id="GO:0000978">
    <property type="term" value="F:RNA polymerase II cis-regulatory region sequence-specific DNA binding"/>
    <property type="evidence" value="ECO:0000318"/>
    <property type="project" value="GO_Central"/>
</dbReference>
<dbReference type="GO" id="GO:0007420">
    <property type="term" value="P:brain development"/>
    <property type="evidence" value="ECO:0000315"/>
    <property type="project" value="FlyBase"/>
</dbReference>
<dbReference type="GO" id="GO:0030154">
    <property type="term" value="P:cell differentiation"/>
    <property type="evidence" value="ECO:0000318"/>
    <property type="project" value="GO_Central"/>
</dbReference>
<dbReference type="GO" id="GO:0021782">
    <property type="term" value="P:glial cell development"/>
    <property type="evidence" value="ECO:0000315"/>
    <property type="project" value="FlyBase"/>
</dbReference>
<dbReference type="GO" id="GO:0010629">
    <property type="term" value="P:negative regulation of gene expression"/>
    <property type="evidence" value="ECO:0000315"/>
    <property type="project" value="FlyBase"/>
</dbReference>
<dbReference type="GO" id="GO:0000122">
    <property type="term" value="P:negative regulation of transcription by RNA polymerase II"/>
    <property type="evidence" value="ECO:0000315"/>
    <property type="project" value="FlyBase"/>
</dbReference>
<dbReference type="GO" id="GO:0014019">
    <property type="term" value="P:neuroblast development"/>
    <property type="evidence" value="ECO:0000315"/>
    <property type="project" value="FlyBase"/>
</dbReference>
<dbReference type="GO" id="GO:0007400">
    <property type="term" value="P:neuroblast fate determination"/>
    <property type="evidence" value="ECO:0000315"/>
    <property type="project" value="FlyBase"/>
</dbReference>
<dbReference type="GO" id="GO:0045944">
    <property type="term" value="P:positive regulation of transcription by RNA polymerase II"/>
    <property type="evidence" value="ECO:0000314"/>
    <property type="project" value="FlyBase"/>
</dbReference>
<dbReference type="GO" id="GO:0006357">
    <property type="term" value="P:regulation of transcription by RNA polymerase II"/>
    <property type="evidence" value="ECO:0000315"/>
    <property type="project" value="FlyBase"/>
</dbReference>
<dbReference type="CDD" id="cd00086">
    <property type="entry name" value="homeodomain"/>
    <property type="match status" value="1"/>
</dbReference>
<dbReference type="FunFam" id="1.10.10.60:FF:000101">
    <property type="entry name" value="NK2 homeobox 8"/>
    <property type="match status" value="1"/>
</dbReference>
<dbReference type="Gene3D" id="1.10.10.60">
    <property type="entry name" value="Homeodomain-like"/>
    <property type="match status" value="1"/>
</dbReference>
<dbReference type="InterPro" id="IPR001356">
    <property type="entry name" value="HD"/>
</dbReference>
<dbReference type="InterPro" id="IPR017970">
    <property type="entry name" value="Homeobox_CS"/>
</dbReference>
<dbReference type="InterPro" id="IPR050394">
    <property type="entry name" value="Homeobox_NK-like"/>
</dbReference>
<dbReference type="InterPro" id="IPR009057">
    <property type="entry name" value="Homeodomain-like_sf"/>
</dbReference>
<dbReference type="PANTHER" id="PTHR24340">
    <property type="entry name" value="HOMEOBOX PROTEIN NKX"/>
    <property type="match status" value="1"/>
</dbReference>
<dbReference type="PANTHER" id="PTHR24340:SF82">
    <property type="entry name" value="HOMEOBOX PROTEIN VND"/>
    <property type="match status" value="1"/>
</dbReference>
<dbReference type="Pfam" id="PF00046">
    <property type="entry name" value="Homeodomain"/>
    <property type="match status" value="1"/>
</dbReference>
<dbReference type="SMART" id="SM00389">
    <property type="entry name" value="HOX"/>
    <property type="match status" value="1"/>
</dbReference>
<dbReference type="SUPFAM" id="SSF46689">
    <property type="entry name" value="Homeodomain-like"/>
    <property type="match status" value="1"/>
</dbReference>
<dbReference type="PROSITE" id="PS00027">
    <property type="entry name" value="HOMEOBOX_1"/>
    <property type="match status" value="1"/>
</dbReference>
<dbReference type="PROSITE" id="PS50071">
    <property type="entry name" value="HOMEOBOX_2"/>
    <property type="match status" value="1"/>
</dbReference>
<organism>
    <name type="scientific">Drosophila melanogaster</name>
    <name type="common">Fruit fly</name>
    <dbReference type="NCBI Taxonomy" id="7227"/>
    <lineage>
        <taxon>Eukaryota</taxon>
        <taxon>Metazoa</taxon>
        <taxon>Ecdysozoa</taxon>
        <taxon>Arthropoda</taxon>
        <taxon>Hexapoda</taxon>
        <taxon>Insecta</taxon>
        <taxon>Pterygota</taxon>
        <taxon>Neoptera</taxon>
        <taxon>Endopterygota</taxon>
        <taxon>Diptera</taxon>
        <taxon>Brachycera</taxon>
        <taxon>Muscomorpha</taxon>
        <taxon>Ephydroidea</taxon>
        <taxon>Drosophilidae</taxon>
        <taxon>Drosophila</taxon>
        <taxon>Sophophora</taxon>
    </lineage>
</organism>
<protein>
    <recommendedName>
        <fullName>Homeobox protein vnd</fullName>
    </recommendedName>
    <alternativeName>
        <fullName>Homeobox protein NK-2</fullName>
    </alternativeName>
    <alternativeName>
        <fullName>Protein ventral nervous system defective</fullName>
    </alternativeName>
</protein>
<proteinExistence type="evidence at protein level"/>
<keyword id="KW-0002">3D-structure</keyword>
<keyword id="KW-0217">Developmental protein</keyword>
<keyword id="KW-0221">Differentiation</keyword>
<keyword id="KW-0238">DNA-binding</keyword>
<keyword id="KW-0371">Homeobox</keyword>
<keyword id="KW-0524">Neurogenesis</keyword>
<keyword id="KW-0539">Nucleus</keyword>
<keyword id="KW-1185">Reference proteome</keyword>
<keyword id="KW-0804">Transcription</keyword>
<keyword id="KW-0805">Transcription regulation</keyword>